<dbReference type="EC" id="2.1.3.15" evidence="1"/>
<dbReference type="EMBL" id="CP000802">
    <property type="protein sequence ID" value="ABV04585.1"/>
    <property type="molecule type" value="Genomic_DNA"/>
</dbReference>
<dbReference type="RefSeq" id="WP_000055741.1">
    <property type="nucleotide sequence ID" value="NC_009800.1"/>
</dbReference>
<dbReference type="SMR" id="A7ZWD1"/>
<dbReference type="GeneID" id="86945115"/>
<dbReference type="KEGG" id="ecx:EcHS_A0187"/>
<dbReference type="HOGENOM" id="CLU_015486_0_2_6"/>
<dbReference type="UniPathway" id="UPA00655">
    <property type="reaction ID" value="UER00711"/>
</dbReference>
<dbReference type="GO" id="GO:0009317">
    <property type="term" value="C:acetyl-CoA carboxylase complex"/>
    <property type="evidence" value="ECO:0007669"/>
    <property type="project" value="InterPro"/>
</dbReference>
<dbReference type="GO" id="GO:0003989">
    <property type="term" value="F:acetyl-CoA carboxylase activity"/>
    <property type="evidence" value="ECO:0007669"/>
    <property type="project" value="InterPro"/>
</dbReference>
<dbReference type="GO" id="GO:0005524">
    <property type="term" value="F:ATP binding"/>
    <property type="evidence" value="ECO:0007669"/>
    <property type="project" value="UniProtKB-KW"/>
</dbReference>
<dbReference type="GO" id="GO:0016743">
    <property type="term" value="F:carboxyl- or carbamoyltransferase activity"/>
    <property type="evidence" value="ECO:0007669"/>
    <property type="project" value="UniProtKB-UniRule"/>
</dbReference>
<dbReference type="GO" id="GO:0006633">
    <property type="term" value="P:fatty acid biosynthetic process"/>
    <property type="evidence" value="ECO:0007669"/>
    <property type="project" value="UniProtKB-KW"/>
</dbReference>
<dbReference type="GO" id="GO:2001295">
    <property type="term" value="P:malonyl-CoA biosynthetic process"/>
    <property type="evidence" value="ECO:0007669"/>
    <property type="project" value="UniProtKB-UniRule"/>
</dbReference>
<dbReference type="FunFam" id="3.90.226.10:FF:000008">
    <property type="entry name" value="Acetyl-coenzyme A carboxylase carboxyl transferase subunit alpha"/>
    <property type="match status" value="1"/>
</dbReference>
<dbReference type="Gene3D" id="3.90.226.10">
    <property type="entry name" value="2-enoyl-CoA Hydratase, Chain A, domain 1"/>
    <property type="match status" value="1"/>
</dbReference>
<dbReference type="HAMAP" id="MF_00823">
    <property type="entry name" value="AcetylCoA_CT_alpha"/>
    <property type="match status" value="1"/>
</dbReference>
<dbReference type="InterPro" id="IPR001095">
    <property type="entry name" value="Acetyl_CoA_COase_a_su"/>
</dbReference>
<dbReference type="InterPro" id="IPR029045">
    <property type="entry name" value="ClpP/crotonase-like_dom_sf"/>
</dbReference>
<dbReference type="InterPro" id="IPR011763">
    <property type="entry name" value="COA_CT_C"/>
</dbReference>
<dbReference type="NCBIfam" id="TIGR00513">
    <property type="entry name" value="accA"/>
    <property type="match status" value="1"/>
</dbReference>
<dbReference type="NCBIfam" id="NF041504">
    <property type="entry name" value="AccA_sub"/>
    <property type="match status" value="1"/>
</dbReference>
<dbReference type="NCBIfam" id="NF004344">
    <property type="entry name" value="PRK05724.1"/>
    <property type="match status" value="1"/>
</dbReference>
<dbReference type="PANTHER" id="PTHR42853">
    <property type="entry name" value="ACETYL-COENZYME A CARBOXYLASE CARBOXYL TRANSFERASE SUBUNIT ALPHA"/>
    <property type="match status" value="1"/>
</dbReference>
<dbReference type="PANTHER" id="PTHR42853:SF3">
    <property type="entry name" value="ACETYL-COENZYME A CARBOXYLASE CARBOXYL TRANSFERASE SUBUNIT ALPHA, CHLOROPLASTIC"/>
    <property type="match status" value="1"/>
</dbReference>
<dbReference type="Pfam" id="PF03255">
    <property type="entry name" value="ACCA"/>
    <property type="match status" value="1"/>
</dbReference>
<dbReference type="PRINTS" id="PR01069">
    <property type="entry name" value="ACCCTRFRASEA"/>
</dbReference>
<dbReference type="SUPFAM" id="SSF52096">
    <property type="entry name" value="ClpP/crotonase"/>
    <property type="match status" value="1"/>
</dbReference>
<dbReference type="PROSITE" id="PS50989">
    <property type="entry name" value="COA_CT_CTER"/>
    <property type="match status" value="1"/>
</dbReference>
<accession>A7ZWD1</accession>
<evidence type="ECO:0000255" key="1">
    <source>
        <dbReference type="HAMAP-Rule" id="MF_00823"/>
    </source>
</evidence>
<evidence type="ECO:0000255" key="2">
    <source>
        <dbReference type="PROSITE-ProRule" id="PRU01137"/>
    </source>
</evidence>
<name>ACCA_ECOHS</name>
<reference key="1">
    <citation type="journal article" date="2008" name="J. Bacteriol.">
        <title>The pangenome structure of Escherichia coli: comparative genomic analysis of E. coli commensal and pathogenic isolates.</title>
        <authorList>
            <person name="Rasko D.A."/>
            <person name="Rosovitz M.J."/>
            <person name="Myers G.S.A."/>
            <person name="Mongodin E.F."/>
            <person name="Fricke W.F."/>
            <person name="Gajer P."/>
            <person name="Crabtree J."/>
            <person name="Sebaihia M."/>
            <person name="Thomson N.R."/>
            <person name="Chaudhuri R."/>
            <person name="Henderson I.R."/>
            <person name="Sperandio V."/>
            <person name="Ravel J."/>
        </authorList>
    </citation>
    <scope>NUCLEOTIDE SEQUENCE [LARGE SCALE GENOMIC DNA]</scope>
    <source>
        <strain>HS</strain>
    </source>
</reference>
<keyword id="KW-0067">ATP-binding</keyword>
<keyword id="KW-0963">Cytoplasm</keyword>
<keyword id="KW-0275">Fatty acid biosynthesis</keyword>
<keyword id="KW-0276">Fatty acid metabolism</keyword>
<keyword id="KW-0444">Lipid biosynthesis</keyword>
<keyword id="KW-0443">Lipid metabolism</keyword>
<keyword id="KW-0547">Nucleotide-binding</keyword>
<keyword id="KW-0808">Transferase</keyword>
<comment type="function">
    <text evidence="1">Component of the acetyl coenzyme A carboxylase (ACC) complex. First, biotin carboxylase catalyzes the carboxylation of biotin on its carrier protein (BCCP) and then the CO(2) group is transferred by the carboxyltransferase to acetyl-CoA to form malonyl-CoA.</text>
</comment>
<comment type="catalytic activity">
    <reaction evidence="1">
        <text>N(6)-carboxybiotinyl-L-lysyl-[protein] + acetyl-CoA = N(6)-biotinyl-L-lysyl-[protein] + malonyl-CoA</text>
        <dbReference type="Rhea" id="RHEA:54728"/>
        <dbReference type="Rhea" id="RHEA-COMP:10505"/>
        <dbReference type="Rhea" id="RHEA-COMP:10506"/>
        <dbReference type="ChEBI" id="CHEBI:57288"/>
        <dbReference type="ChEBI" id="CHEBI:57384"/>
        <dbReference type="ChEBI" id="CHEBI:83144"/>
        <dbReference type="ChEBI" id="CHEBI:83145"/>
        <dbReference type="EC" id="2.1.3.15"/>
    </reaction>
</comment>
<comment type="pathway">
    <text evidence="1">Lipid metabolism; malonyl-CoA biosynthesis; malonyl-CoA from acetyl-CoA: step 1/1.</text>
</comment>
<comment type="subunit">
    <text evidence="1">Acetyl-CoA carboxylase is a heterohexamer composed of biotin carboxyl carrier protein (AccB), biotin carboxylase (AccC) and two subunits each of ACCase subunit alpha (AccA) and ACCase subunit beta (AccD).</text>
</comment>
<comment type="subcellular location">
    <subcellularLocation>
        <location evidence="1">Cytoplasm</location>
    </subcellularLocation>
</comment>
<comment type="similarity">
    <text evidence="1">Belongs to the AccA family.</text>
</comment>
<gene>
    <name evidence="1" type="primary">accA</name>
    <name type="ordered locus">EcHS_A0187</name>
</gene>
<feature type="chain" id="PRO_1000062612" description="Acetyl-coenzyme A carboxylase carboxyl transferase subunit alpha">
    <location>
        <begin position="1"/>
        <end position="319"/>
    </location>
</feature>
<feature type="domain" description="CoA carboxyltransferase C-terminal" evidence="2">
    <location>
        <begin position="35"/>
        <end position="296"/>
    </location>
</feature>
<proteinExistence type="inferred from homology"/>
<sequence length="319" mass="35242">MSLNFLDFEQPIAELEAKIDSLTAVSRQDEKLDINIDEEVHRLREKSVELTRKIFADLGAWQIAQLARHPQRPYTLDYVRLAFDEFDELAGDRAYADDKAIVGGIARLDGRPVMIIGHQKGRETKEKIRRNFGMPAPEGYRKALRLMQMAERFKMPIITFIDTPGAYPGVGAEERGQSEAIARNLREMSRLGVPVVCTVIGEGGSGGALAIGVGDKVNMLQYSTYSVISPEGCASILWKSADKAPLAAEAMGIIAPRLKELKLIDSIIPEPLGGAHRNPEAMAASLKAQLLADLADLDVLSTEDLKNRRYQRLMSYGYA</sequence>
<protein>
    <recommendedName>
        <fullName evidence="1">Acetyl-coenzyme A carboxylase carboxyl transferase subunit alpha</fullName>
        <shortName evidence="1">ACCase subunit alpha</shortName>
        <shortName evidence="1">Acetyl-CoA carboxylase carboxyltransferase subunit alpha</shortName>
        <ecNumber evidence="1">2.1.3.15</ecNumber>
    </recommendedName>
</protein>
<organism>
    <name type="scientific">Escherichia coli O9:H4 (strain HS)</name>
    <dbReference type="NCBI Taxonomy" id="331112"/>
    <lineage>
        <taxon>Bacteria</taxon>
        <taxon>Pseudomonadati</taxon>
        <taxon>Pseudomonadota</taxon>
        <taxon>Gammaproteobacteria</taxon>
        <taxon>Enterobacterales</taxon>
        <taxon>Enterobacteriaceae</taxon>
        <taxon>Escherichia</taxon>
    </lineage>
</organism>